<evidence type="ECO:0000255" key="1">
    <source>
        <dbReference type="HAMAP-Rule" id="MF_00076"/>
    </source>
</evidence>
<organism>
    <name type="scientific">Rhodopseudomonas palustris (strain BisB5)</name>
    <dbReference type="NCBI Taxonomy" id="316057"/>
    <lineage>
        <taxon>Bacteria</taxon>
        <taxon>Pseudomonadati</taxon>
        <taxon>Pseudomonadota</taxon>
        <taxon>Alphaproteobacteria</taxon>
        <taxon>Hyphomicrobiales</taxon>
        <taxon>Nitrobacteraceae</taxon>
        <taxon>Rhodopseudomonas</taxon>
    </lineage>
</organism>
<accession>Q13E36</accession>
<protein>
    <recommendedName>
        <fullName evidence="1">Imidazoleglycerol-phosphate dehydratase</fullName>
        <shortName evidence="1">IGPD</shortName>
        <ecNumber evidence="1">4.2.1.19</ecNumber>
    </recommendedName>
</protein>
<dbReference type="EC" id="4.2.1.19" evidence="1"/>
<dbReference type="EMBL" id="CP000283">
    <property type="protein sequence ID" value="ABE37653.1"/>
    <property type="molecule type" value="Genomic_DNA"/>
</dbReference>
<dbReference type="SMR" id="Q13E36"/>
<dbReference type="STRING" id="316057.RPD_0415"/>
<dbReference type="KEGG" id="rpd:RPD_0415"/>
<dbReference type="eggNOG" id="COG0131">
    <property type="taxonomic scope" value="Bacteria"/>
</dbReference>
<dbReference type="HOGENOM" id="CLU_044308_2_0_5"/>
<dbReference type="BioCyc" id="RPAL316057:RPD_RS02135-MONOMER"/>
<dbReference type="UniPathway" id="UPA00031">
    <property type="reaction ID" value="UER00011"/>
</dbReference>
<dbReference type="Proteomes" id="UP000001818">
    <property type="component" value="Chromosome"/>
</dbReference>
<dbReference type="GO" id="GO:0005737">
    <property type="term" value="C:cytoplasm"/>
    <property type="evidence" value="ECO:0007669"/>
    <property type="project" value="UniProtKB-SubCell"/>
</dbReference>
<dbReference type="GO" id="GO:0004424">
    <property type="term" value="F:imidazoleglycerol-phosphate dehydratase activity"/>
    <property type="evidence" value="ECO:0007669"/>
    <property type="project" value="UniProtKB-UniRule"/>
</dbReference>
<dbReference type="GO" id="GO:0000105">
    <property type="term" value="P:L-histidine biosynthetic process"/>
    <property type="evidence" value="ECO:0007669"/>
    <property type="project" value="UniProtKB-UniRule"/>
</dbReference>
<dbReference type="CDD" id="cd07914">
    <property type="entry name" value="IGPD"/>
    <property type="match status" value="1"/>
</dbReference>
<dbReference type="FunFam" id="3.30.230.40:FF:000001">
    <property type="entry name" value="Imidazoleglycerol-phosphate dehydratase HisB"/>
    <property type="match status" value="1"/>
</dbReference>
<dbReference type="FunFam" id="3.30.230.40:FF:000003">
    <property type="entry name" value="Imidazoleglycerol-phosphate dehydratase HisB"/>
    <property type="match status" value="1"/>
</dbReference>
<dbReference type="Gene3D" id="3.30.230.40">
    <property type="entry name" value="Imidazole glycerol phosphate dehydratase, domain 1"/>
    <property type="match status" value="2"/>
</dbReference>
<dbReference type="HAMAP" id="MF_00076">
    <property type="entry name" value="HisB"/>
    <property type="match status" value="1"/>
</dbReference>
<dbReference type="InterPro" id="IPR038494">
    <property type="entry name" value="IGPD_sf"/>
</dbReference>
<dbReference type="InterPro" id="IPR000807">
    <property type="entry name" value="ImidazoleglycerolP_deHydtase"/>
</dbReference>
<dbReference type="InterPro" id="IPR020565">
    <property type="entry name" value="ImidazoleglycerP_deHydtase_CS"/>
</dbReference>
<dbReference type="InterPro" id="IPR020568">
    <property type="entry name" value="Ribosomal_Su5_D2-typ_SF"/>
</dbReference>
<dbReference type="NCBIfam" id="NF002109">
    <property type="entry name" value="PRK00951.1-5"/>
    <property type="match status" value="1"/>
</dbReference>
<dbReference type="NCBIfam" id="NF002111">
    <property type="entry name" value="PRK00951.2-1"/>
    <property type="match status" value="1"/>
</dbReference>
<dbReference type="NCBIfam" id="NF002114">
    <property type="entry name" value="PRK00951.2-4"/>
    <property type="match status" value="1"/>
</dbReference>
<dbReference type="PANTHER" id="PTHR23133:SF2">
    <property type="entry name" value="IMIDAZOLEGLYCEROL-PHOSPHATE DEHYDRATASE"/>
    <property type="match status" value="1"/>
</dbReference>
<dbReference type="PANTHER" id="PTHR23133">
    <property type="entry name" value="IMIDAZOLEGLYCEROL-PHOSPHATE DEHYDRATASE HIS7"/>
    <property type="match status" value="1"/>
</dbReference>
<dbReference type="Pfam" id="PF00475">
    <property type="entry name" value="IGPD"/>
    <property type="match status" value="1"/>
</dbReference>
<dbReference type="SUPFAM" id="SSF54211">
    <property type="entry name" value="Ribosomal protein S5 domain 2-like"/>
    <property type="match status" value="2"/>
</dbReference>
<dbReference type="PROSITE" id="PS00954">
    <property type="entry name" value="IGP_DEHYDRATASE_1"/>
    <property type="match status" value="1"/>
</dbReference>
<dbReference type="PROSITE" id="PS00955">
    <property type="entry name" value="IGP_DEHYDRATASE_2"/>
    <property type="match status" value="1"/>
</dbReference>
<keyword id="KW-0028">Amino-acid biosynthesis</keyword>
<keyword id="KW-0963">Cytoplasm</keyword>
<keyword id="KW-0368">Histidine biosynthesis</keyword>
<keyword id="KW-0456">Lyase</keyword>
<gene>
    <name evidence="1" type="primary">hisB</name>
    <name type="ordered locus">RPD_0415</name>
</gene>
<reference key="1">
    <citation type="submission" date="2006-03" db="EMBL/GenBank/DDBJ databases">
        <title>Complete sequence of Rhodopseudomonas palustris BisB5.</title>
        <authorList>
            <consortium name="US DOE Joint Genome Institute"/>
            <person name="Copeland A."/>
            <person name="Lucas S."/>
            <person name="Lapidus A."/>
            <person name="Barry K."/>
            <person name="Detter J.C."/>
            <person name="Glavina del Rio T."/>
            <person name="Hammon N."/>
            <person name="Israni S."/>
            <person name="Dalin E."/>
            <person name="Tice H."/>
            <person name="Pitluck S."/>
            <person name="Chain P."/>
            <person name="Malfatti S."/>
            <person name="Shin M."/>
            <person name="Vergez L."/>
            <person name="Schmutz J."/>
            <person name="Larimer F."/>
            <person name="Land M."/>
            <person name="Hauser L."/>
            <person name="Pelletier D.A."/>
            <person name="Kyrpides N."/>
            <person name="Lykidis A."/>
            <person name="Oda Y."/>
            <person name="Harwood C.S."/>
            <person name="Richardson P."/>
        </authorList>
    </citation>
    <scope>NUCLEOTIDE SEQUENCE [LARGE SCALE GENOMIC DNA]</scope>
    <source>
        <strain>BisB5</strain>
    </source>
</reference>
<feature type="chain" id="PRO_1000010344" description="Imidazoleglycerol-phosphate dehydratase">
    <location>
        <begin position="1"/>
        <end position="197"/>
    </location>
</feature>
<comment type="catalytic activity">
    <reaction evidence="1">
        <text>D-erythro-1-(imidazol-4-yl)glycerol 3-phosphate = 3-(imidazol-4-yl)-2-oxopropyl phosphate + H2O</text>
        <dbReference type="Rhea" id="RHEA:11040"/>
        <dbReference type="ChEBI" id="CHEBI:15377"/>
        <dbReference type="ChEBI" id="CHEBI:57766"/>
        <dbReference type="ChEBI" id="CHEBI:58278"/>
        <dbReference type="EC" id="4.2.1.19"/>
    </reaction>
</comment>
<comment type="pathway">
    <text evidence="1">Amino-acid biosynthesis; L-histidine biosynthesis; L-histidine from 5-phospho-alpha-D-ribose 1-diphosphate: step 6/9.</text>
</comment>
<comment type="subcellular location">
    <subcellularLocation>
        <location evidence="1">Cytoplasm</location>
    </subcellularLocation>
</comment>
<comment type="similarity">
    <text evidence="1">Belongs to the imidazoleglycerol-phosphate dehydratase family.</text>
</comment>
<proteinExistence type="inferred from homology"/>
<name>HIS7_RHOPS</name>
<sequence length="197" mass="21335">MRTATIKRKTKETDIEVTVNLDGAGVSNAATGIGFFDHMLDLLAKHSRIDITVKAVGDLHVDFHHTTEDVGIALGQAVKQALGNMAGINRYASMLMPMDETLTRVVIDVSGRPFLVFKADFPRDKIGEFDTELVREWFQAFAMNAGVTLHVETLYGENSHHIAESCFKGLARALRAAVAIDPQAAGEVPSTKGQLGG</sequence>